<keyword id="KW-0002">3D-structure</keyword>
<keyword id="KW-0025">Alternative splicing</keyword>
<keyword id="KW-0175">Coiled coil</keyword>
<keyword id="KW-0325">Glycoprotein</keyword>
<keyword id="KW-0472">Membrane</keyword>
<keyword id="KW-0509">mRNA transport</keyword>
<keyword id="KW-0906">Nuclear pore complex</keyword>
<keyword id="KW-0539">Nucleus</keyword>
<keyword id="KW-0597">Phosphoprotein</keyword>
<keyword id="KW-0653">Protein transport</keyword>
<keyword id="KW-1267">Proteomics identification</keyword>
<keyword id="KW-1185">Reference proteome</keyword>
<keyword id="KW-0677">Repeat</keyword>
<keyword id="KW-0811">Translocation</keyword>
<keyword id="KW-0813">Transport</keyword>
<accession>Q9BVL2</accession>
<accession>A6NI12</accession>
<accession>B4DZJ1</accession>
<accession>O43160</accession>
<accession>Q5JRG2</accession>
<accession>Q5JRG5</accession>
<comment type="function">
    <text evidence="2">Component of the nuclear pore complex, a complex required for the trafficking across the nuclear membrane.</text>
</comment>
<comment type="subunit">
    <text evidence="2">Component of the p62 complex, a complex at least composed of NUP62, NUP54, and NUP58. Interacts with NUTF2. Interacts with SRP1-alpha and Importin p97 proteins when they are together, but not with SRP1-alpha protein alone (By similarity).</text>
</comment>
<comment type="interaction">
    <interactant intactId="EBI-2811583">
        <id>Q9BVL2</id>
    </interactant>
    <interactant intactId="EBI-742038">
        <id>Q9P2A4</id>
        <label>ABI3</label>
    </interactant>
    <organismsDiffer>false</organismsDiffer>
    <experiments>7</experiments>
</comment>
<comment type="interaction">
    <interactant intactId="EBI-2811583">
        <id>Q9BVL2</id>
    </interactant>
    <interactant intactId="EBI-712648">
        <id>O95994</id>
        <label>AGR2</label>
    </interactant>
    <organismsDiffer>false</organismsDiffer>
    <experiments>5</experiments>
</comment>
<comment type="interaction">
    <interactant intactId="EBI-2811583">
        <id>Q9BVL2</id>
    </interactant>
    <interactant intactId="EBI-11022349">
        <id>Q99996-3</id>
        <label>AKAP9</label>
    </interactant>
    <organismsDiffer>false</organismsDiffer>
    <experiments>3</experiments>
</comment>
<comment type="interaction">
    <interactant intactId="EBI-2811583">
        <id>Q9BVL2</id>
    </interactant>
    <interactant intactId="EBI-11893530">
        <id>Q9NP70</id>
        <label>AMBN</label>
    </interactant>
    <organismsDiffer>false</organismsDiffer>
    <experiments>3</experiments>
</comment>
<comment type="interaction">
    <interactant intactId="EBI-2811583">
        <id>Q9BVL2</id>
    </interactant>
    <interactant intactId="EBI-22012297">
        <id>Q52LW3-2</id>
        <label>ARHGAP29</label>
    </interactant>
    <organismsDiffer>false</organismsDiffer>
    <experiments>3</experiments>
</comment>
<comment type="interaction">
    <interactant intactId="EBI-2811583">
        <id>Q9BVL2</id>
    </interactant>
    <interactant intactId="EBI-25843552">
        <id>Q96DX5-3</id>
        <label>ASB9</label>
    </interactant>
    <organismsDiffer>false</organismsDiffer>
    <experiments>3</experiments>
</comment>
<comment type="interaction">
    <interactant intactId="EBI-2811583">
        <id>Q9BVL2</id>
    </interactant>
    <interactant intactId="EBI-9089489">
        <id>Q96FT7-4</id>
        <label>ASIC4</label>
    </interactant>
    <organismsDiffer>false</organismsDiffer>
    <experiments>3</experiments>
</comment>
<comment type="interaction">
    <interactant intactId="EBI-2811583">
        <id>Q9BVL2</id>
    </interactant>
    <interactant intactId="EBI-718459">
        <id>Q9UII2</id>
        <label>ATP5IF1</label>
    </interactant>
    <organismsDiffer>false</organismsDiffer>
    <experiments>3</experiments>
</comment>
<comment type="interaction">
    <interactant intactId="EBI-2811583">
        <id>Q9BVL2</id>
    </interactant>
    <interactant intactId="EBI-742750">
        <id>Q8TBE0</id>
        <label>BAHD1</label>
    </interactant>
    <organismsDiffer>false</organismsDiffer>
    <experiments>3</experiments>
</comment>
<comment type="interaction">
    <interactant intactId="EBI-2811583">
        <id>Q9BVL2</id>
    </interactant>
    <interactant intactId="EBI-1050106">
        <id>O75934</id>
        <label>BCAS2</label>
    </interactant>
    <organismsDiffer>false</organismsDiffer>
    <experiments>3</experiments>
</comment>
<comment type="interaction">
    <interactant intactId="EBI-2811583">
        <id>Q9BVL2</id>
    </interactant>
    <interactant intactId="EBI-958997">
        <id>P20749</id>
        <label>BCL3</label>
    </interactant>
    <organismsDiffer>false</organismsDiffer>
    <experiments>3</experiments>
</comment>
<comment type="interaction">
    <interactant intactId="EBI-2811583">
        <id>Q9BVL2</id>
    </interactant>
    <interactant intactId="EBI-2837444">
        <id>Q8WUW1</id>
        <label>BRK1</label>
    </interactant>
    <organismsDiffer>false</organismsDiffer>
    <experiments>3</experiments>
</comment>
<comment type="interaction">
    <interactant intactId="EBI-2811583">
        <id>Q9BVL2</id>
    </interactant>
    <interactant intactId="EBI-741210">
        <id>Q0VDD7</id>
        <label>BRME1</label>
    </interactant>
    <organismsDiffer>false</organismsDiffer>
    <experiments>3</experiments>
</comment>
<comment type="interaction">
    <interactant intactId="EBI-2811583">
        <id>Q9BVL2</id>
    </interactant>
    <interactant intactId="EBI-12300031">
        <id>Q9NNX6-10</id>
        <label>CD209</label>
    </interactant>
    <organismsDiffer>false</organismsDiffer>
    <experiments>3</experiments>
</comment>
<comment type="interaction">
    <interactant intactId="EBI-2811583">
        <id>Q9BVL2</id>
    </interactant>
    <interactant intactId="EBI-749253">
        <id>Q8WUX9</id>
        <label>CHMP7</label>
    </interactant>
    <organismsDiffer>false</organismsDiffer>
    <experiments>3</experiments>
</comment>
<comment type="interaction">
    <interactant intactId="EBI-2811583">
        <id>Q9BVL2</id>
    </interactant>
    <interactant intactId="EBI-9091495">
        <id>Q96JB2-2</id>
        <label>COG3</label>
    </interactant>
    <organismsDiffer>false</organismsDiffer>
    <experiments>6</experiments>
</comment>
<comment type="interaction">
    <interactant intactId="EBI-2811583">
        <id>Q9BVL2</id>
    </interactant>
    <interactant intactId="EBI-3866319">
        <id>Q9Y2V7</id>
        <label>COG6</label>
    </interactant>
    <organismsDiffer>false</organismsDiffer>
    <experiments>3</experiments>
</comment>
<comment type="interaction">
    <interactant intactId="EBI-2811583">
        <id>Q9BVL2</id>
    </interactant>
    <interactant intactId="EBI-720875">
        <id>Q96MW5</id>
        <label>COG8</label>
    </interactant>
    <organismsDiffer>false</organismsDiffer>
    <experiments>3</experiments>
</comment>
<comment type="interaction">
    <interactant intactId="EBI-2811583">
        <id>Q9BVL2</id>
    </interactant>
    <interactant intactId="EBI-25836642">
        <id>Q8NE08</id>
        <label>COL25A1</label>
    </interactant>
    <organismsDiffer>false</organismsDiffer>
    <experiments>3</experiments>
</comment>
<comment type="interaction">
    <interactant intactId="EBI-2811583">
        <id>Q9BVL2</id>
    </interactant>
    <interactant intactId="EBI-742413">
        <id>Q9BT78</id>
        <label>COPS4</label>
    </interactant>
    <organismsDiffer>false</organismsDiffer>
    <experiments>3</experiments>
</comment>
<comment type="interaction">
    <interactant intactId="EBI-2811583">
        <id>Q9BVL2</id>
    </interactant>
    <interactant intactId="EBI-25876196">
        <id>P24310</id>
        <label>COX7A1</label>
    </interactant>
    <organismsDiffer>false</organismsDiffer>
    <experiments>3</experiments>
</comment>
<comment type="interaction">
    <interactant intactId="EBI-2811583">
        <id>Q9BVL2</id>
    </interactant>
    <interactant intactId="EBI-12091947">
        <id>O75935-2</id>
        <label>DCTN3</label>
    </interactant>
    <organismsDiffer>false</organismsDiffer>
    <experiments>3</experiments>
</comment>
<comment type="interaction">
    <interactant intactId="EBI-2811583">
        <id>Q9BVL2</id>
    </interactant>
    <interactant intactId="EBI-2805660">
        <id>Q14154</id>
        <label>DELE1</label>
    </interactant>
    <organismsDiffer>false</organismsDiffer>
    <experiments>3</experiments>
</comment>
<comment type="interaction">
    <interactant intactId="EBI-2811583">
        <id>Q9BVL2</id>
    </interactant>
    <interactant intactId="EBI-21529239">
        <id>Q86TI2-2</id>
        <label>DPP9</label>
    </interactant>
    <organismsDiffer>false</organismsDiffer>
    <experiments>3</experiments>
</comment>
<comment type="interaction">
    <interactant intactId="EBI-2811583">
        <id>Q9BVL2</id>
    </interactant>
    <interactant intactId="EBI-12275416">
        <id>Q14117</id>
        <label>DPYS</label>
    </interactant>
    <organismsDiffer>false</organismsDiffer>
    <experiments>3</experiments>
</comment>
<comment type="interaction">
    <interactant intactId="EBI-2811583">
        <id>Q9BVL2</id>
    </interactant>
    <interactant intactId="EBI-1001144">
        <id>Q9H410</id>
        <label>DSN1</label>
    </interactant>
    <organismsDiffer>false</organismsDiffer>
    <experiments>3</experiments>
</comment>
<comment type="interaction">
    <interactant intactId="EBI-2811583">
        <id>Q9BVL2</id>
    </interactant>
    <interactant intactId="EBI-10178160">
        <id>H3BUJ7</id>
        <label>E4F1</label>
    </interactant>
    <organismsDiffer>false</organismsDiffer>
    <experiments>3</experiments>
</comment>
<comment type="interaction">
    <interactant intactId="EBI-2811583">
        <id>Q9BVL2</id>
    </interactant>
    <interactant intactId="EBI-711990">
        <id>O00303</id>
        <label>EIF3F</label>
    </interactant>
    <organismsDiffer>false</organismsDiffer>
    <experiments>3</experiments>
</comment>
<comment type="interaction">
    <interactant intactId="EBI-2811583">
        <id>Q9BVL2</id>
    </interactant>
    <interactant intactId="EBI-1758534">
        <id>P41970</id>
        <label>ELK3</label>
    </interactant>
    <organismsDiffer>false</organismsDiffer>
    <experiments>3</experiments>
</comment>
<comment type="interaction">
    <interactant intactId="EBI-2811583">
        <id>Q9BVL2</id>
    </interactant>
    <interactant intactId="EBI-781527">
        <id>Q969X5</id>
        <label>ERGIC1</label>
    </interactant>
    <organismsDiffer>false</organismsDiffer>
    <experiments>3</experiments>
</comment>
<comment type="interaction">
    <interactant intactId="EBI-2811583">
        <id>Q9BVL2</id>
    </interactant>
    <interactant intactId="EBI-21567429">
        <id>Q6NXG1-3</id>
        <label>ESRP1</label>
    </interactant>
    <organismsDiffer>false</organismsDiffer>
    <experiments>3</experiments>
</comment>
<comment type="interaction">
    <interactant intactId="EBI-2811583">
        <id>Q9BVL2</id>
    </interactant>
    <interactant intactId="EBI-12193763">
        <id>A1KXE4-2</id>
        <label>FAM168B</label>
    </interactant>
    <organismsDiffer>false</organismsDiffer>
    <experiments>3</experiments>
</comment>
<comment type="interaction">
    <interactant intactId="EBI-2811583">
        <id>Q9BVL2</id>
    </interactant>
    <interactant intactId="EBI-81610">
        <id>O15287</id>
        <label>FANCG</label>
    </interactant>
    <organismsDiffer>false</organismsDiffer>
    <experiments>3</experiments>
</comment>
<comment type="interaction">
    <interactant intactId="EBI-2811583">
        <id>Q9BVL2</id>
    </interactant>
    <interactant intactId="EBI-25905795">
        <id>Q9BQS8-2</id>
        <label>FYCO1</label>
    </interactant>
    <organismsDiffer>false</organismsDiffer>
    <experiments>3</experiments>
</comment>
<comment type="interaction">
    <interactant intactId="EBI-2811583">
        <id>Q9BVL2</id>
    </interactant>
    <interactant intactId="EBI-618189">
        <id>Q06547-2</id>
        <label>GABPB1</label>
    </interactant>
    <organismsDiffer>false</organismsDiffer>
    <experiments>3</experiments>
</comment>
<comment type="interaction">
    <interactant intactId="EBI-2811583">
        <id>Q9BVL2</id>
    </interactant>
    <interactant intactId="EBI-9088619">
        <id>Q06547-3</id>
        <label>GABPB1</label>
    </interactant>
    <organismsDiffer>false</organismsDiffer>
    <experiments>3</experiments>
</comment>
<comment type="interaction">
    <interactant intactId="EBI-2811583">
        <id>Q9BVL2</id>
    </interactant>
    <interactant intactId="EBI-2857315">
        <id>Q9BRX5</id>
        <label>GINS3</label>
    </interactant>
    <organismsDiffer>false</organismsDiffer>
    <experiments>3</experiments>
</comment>
<comment type="interaction">
    <interactant intactId="EBI-2811583">
        <id>Q9BVL2</id>
    </interactant>
    <interactant intactId="EBI-3933251">
        <id>Q9NS71</id>
        <label>GKN1</label>
    </interactant>
    <organismsDiffer>false</organismsDiffer>
    <experiments>3</experiments>
</comment>
<comment type="interaction">
    <interactant intactId="EBI-2811583">
        <id>Q9BVL2</id>
    </interactant>
    <interactant intactId="EBI-2514791">
        <id>Q96CS2</id>
        <label>HAUS1</label>
    </interactant>
    <organismsDiffer>false</organismsDiffer>
    <experiments>3</experiments>
</comment>
<comment type="interaction">
    <interactant intactId="EBI-2811583">
        <id>Q9BVL2</id>
    </interactant>
    <interactant intactId="EBI-395719">
        <id>Q99871</id>
        <label>HAUS7</label>
    </interactant>
    <organismsDiffer>false</organismsDiffer>
    <experiments>3</experiments>
</comment>
<comment type="interaction">
    <interactant intactId="EBI-2811583">
        <id>Q9BVL2</id>
    </interactant>
    <interactant intactId="EBI-466029">
        <id>P42858</id>
        <label>HTT</label>
    </interactant>
    <organismsDiffer>false</organismsDiffer>
    <experiments>7</experiments>
</comment>
<comment type="interaction">
    <interactant intactId="EBI-2811583">
        <id>Q9BVL2</id>
    </interactant>
    <interactant intactId="EBI-12141931">
        <id>Q8NDH6-2</id>
        <label>ICA1L</label>
    </interactant>
    <organismsDiffer>false</organismsDiffer>
    <experiments>3</experiments>
</comment>
<comment type="interaction">
    <interactant intactId="EBI-2811583">
        <id>Q9BVL2</id>
    </interactant>
    <interactant intactId="EBI-12823003">
        <id>P80217-2</id>
        <label>IFI35</label>
    </interactant>
    <organismsDiffer>false</organismsDiffer>
    <experiments>3</experiments>
</comment>
<comment type="interaction">
    <interactant intactId="EBI-2811583">
        <id>Q9BVL2</id>
    </interactant>
    <interactant intactId="EBI-11742277">
        <id>Q8IY31-2</id>
        <label>IFT20</label>
    </interactant>
    <organismsDiffer>false</organismsDiffer>
    <experiments>3</experiments>
</comment>
<comment type="interaction">
    <interactant intactId="EBI-2811583">
        <id>Q9BVL2</id>
    </interactant>
    <interactant intactId="EBI-9091197">
        <id>Q8IY31-3</id>
        <label>IFT20</label>
    </interactant>
    <organismsDiffer>false</organismsDiffer>
    <experiments>3</experiments>
</comment>
<comment type="interaction">
    <interactant intactId="EBI-2811583">
        <id>Q9BVL2</id>
    </interactant>
    <interactant intactId="EBI-712105">
        <id>Q13352</id>
        <label>ITGB3BP</label>
    </interactant>
    <organismsDiffer>false</organismsDiffer>
    <experiments>6</experiments>
</comment>
<comment type="interaction">
    <interactant intactId="EBI-2811583">
        <id>Q9BVL2</id>
    </interactant>
    <interactant intactId="EBI-25844799">
        <id>A1A512</id>
        <label>KIAA0355</label>
    </interactant>
    <organismsDiffer>false</organismsDiffer>
    <experiments>3</experiments>
</comment>
<comment type="interaction">
    <interactant intactId="EBI-2811583">
        <id>Q9BVL2</id>
    </interactant>
    <interactant intactId="EBI-739493">
        <id>Q6ZU52</id>
        <label>KIAA0408</label>
    </interactant>
    <organismsDiffer>false</organismsDiffer>
    <experiments>3</experiments>
</comment>
<comment type="interaction">
    <interactant intactId="EBI-2811583">
        <id>Q9BVL2</id>
    </interactant>
    <interactant intactId="EBI-1643885">
        <id>Q6P597</id>
        <label>KLC3</label>
    </interactant>
    <organismsDiffer>false</organismsDiffer>
    <experiments>3</experiments>
</comment>
<comment type="interaction">
    <interactant intactId="EBI-2811583">
        <id>Q9BVL2</id>
    </interactant>
    <interactant intactId="EBI-8472267">
        <id>P57682</id>
        <label>KLF3</label>
    </interactant>
    <organismsDiffer>false</organismsDiffer>
    <experiments>3</experiments>
</comment>
<comment type="interaction">
    <interactant intactId="EBI-2811583">
        <id>Q9BVL2</id>
    </interactant>
    <interactant intactId="EBI-2696013">
        <id>Q13887</id>
        <label>KLF5</label>
    </interactant>
    <organismsDiffer>false</organismsDiffer>
    <experiments>3</experiments>
</comment>
<comment type="interaction">
    <interactant intactId="EBI-2811583">
        <id>Q9BVL2</id>
    </interactant>
    <interactant intactId="EBI-3044087">
        <id>Q7Z3Y8</id>
        <label>KRT27</label>
    </interactant>
    <organismsDiffer>false</organismsDiffer>
    <experiments>3</experiments>
</comment>
<comment type="interaction">
    <interactant intactId="EBI-2811583">
        <id>Q9BVL2</id>
    </interactant>
    <interactant intactId="EBI-11980489">
        <id>Q7Z3Y7</id>
        <label>KRT28</label>
    </interactant>
    <organismsDiffer>false</organismsDiffer>
    <experiments>3</experiments>
</comment>
<comment type="interaction">
    <interactant intactId="EBI-2811583">
        <id>Q9BVL2</id>
    </interactant>
    <interactant intactId="EBI-1049638">
        <id>Q14525</id>
        <label>KRT33B</label>
    </interactant>
    <organismsDiffer>false</organismsDiffer>
    <experiments>6</experiments>
</comment>
<comment type="interaction">
    <interactant intactId="EBI-2811583">
        <id>Q9BVL2</id>
    </interactant>
    <interactant intactId="EBI-9088829">
        <id>Q6DKI2</id>
        <label>LGALS9C</label>
    </interactant>
    <organismsDiffer>false</organismsDiffer>
    <experiments>3</experiments>
</comment>
<comment type="interaction">
    <interactant intactId="EBI-2811583">
        <id>Q9BVL2</id>
    </interactant>
    <interactant intactId="EBI-2350424">
        <id>Q9BV99</id>
        <label>LRRC61</label>
    </interactant>
    <organismsDiffer>false</organismsDiffer>
    <experiments>3</experiments>
</comment>
<comment type="interaction">
    <interactant intactId="EBI-2811583">
        <id>Q9BVL2</id>
    </interactant>
    <interactant intactId="EBI-3911344">
        <id>P27338</id>
        <label>MAOB</label>
    </interactant>
    <organismsDiffer>false</organismsDiffer>
    <experiments>3</experiments>
</comment>
<comment type="interaction">
    <interactant intactId="EBI-2811583">
        <id>Q9BVL2</id>
    </interactant>
    <interactant intactId="EBI-394678">
        <id>Q13503</id>
        <label>MED21</label>
    </interactant>
    <organismsDiffer>false</organismsDiffer>
    <experiments>3</experiments>
</comment>
<comment type="interaction">
    <interactant intactId="EBI-2811583">
        <id>Q9BVL2</id>
    </interactant>
    <interactant intactId="EBI-8025850">
        <id>O14770-4</id>
        <label>MEIS2</label>
    </interactant>
    <organismsDiffer>false</organismsDiffer>
    <experiments>3</experiments>
</comment>
<comment type="interaction">
    <interactant intactId="EBI-2811583">
        <id>Q9BVL2</id>
    </interactant>
    <interactant intactId="EBI-8487781">
        <id>Q8N6F8</id>
        <label>METTL27</label>
    </interactant>
    <organismsDiffer>false</organismsDiffer>
    <experiments>3</experiments>
</comment>
<comment type="interaction">
    <interactant intactId="EBI-2811583">
        <id>Q9BVL2</id>
    </interactant>
    <interactant intactId="EBI-1104552">
        <id>Q9NYP9</id>
        <label>MIS18A</label>
    </interactant>
    <organismsDiffer>false</organismsDiffer>
    <experiments>6</experiments>
</comment>
<comment type="interaction">
    <interactant intactId="EBI-2811583">
        <id>Q9BVL2</id>
    </interactant>
    <interactant intactId="EBI-747381">
        <id>Q9BV20</id>
        <label>MRI1</label>
    </interactant>
    <organismsDiffer>false</organismsDiffer>
    <experiments>3</experiments>
</comment>
<comment type="interaction">
    <interactant intactId="EBI-2811583">
        <id>Q9BVL2</id>
    </interactant>
    <interactant intactId="EBI-996616">
        <id>P02795</id>
        <label>MT2A</label>
    </interactant>
    <organismsDiffer>false</organismsDiffer>
    <experiments>3</experiments>
</comment>
<comment type="interaction">
    <interactant intactId="EBI-2811583">
        <id>Q9BVL2</id>
    </interactant>
    <interactant intactId="EBI-536725">
        <id>Q8IXH7</id>
        <label>NELFCD</label>
    </interactant>
    <organismsDiffer>false</organismsDiffer>
    <experiments>3</experiments>
</comment>
<comment type="interaction">
    <interactant intactId="EBI-2811583">
        <id>Q9BVL2</id>
    </interactant>
    <interactant intactId="EBI-3908303">
        <id>Q13562</id>
        <label>NEUROD1</label>
    </interactant>
    <organismsDiffer>false</organismsDiffer>
    <experiments>3</experiments>
</comment>
<comment type="interaction">
    <interactant intactId="EBI-2811583">
        <id>Q9BVL2</id>
    </interactant>
    <interactant intactId="EBI-741048">
        <id>Q7Z3B4</id>
        <label>NUP54</label>
    </interactant>
    <organismsDiffer>false</organismsDiffer>
    <experiments>14</experiments>
</comment>
<comment type="interaction">
    <interactant intactId="EBI-2811583">
        <id>Q9BVL2</id>
    </interactant>
    <interactant intactId="EBI-347978">
        <id>P37198</id>
        <label>NUP62</label>
    </interactant>
    <organismsDiffer>false</organismsDiffer>
    <experiments>9</experiments>
</comment>
<comment type="interaction">
    <interactant intactId="EBI-2811583">
        <id>Q9BVL2</id>
    </interactant>
    <interactant intactId="EBI-536879">
        <id>O43482</id>
        <label>OIP5</label>
    </interactant>
    <organismsDiffer>false</organismsDiffer>
    <experiments>3</experiments>
</comment>
<comment type="interaction">
    <interactant intactId="EBI-2811583">
        <id>Q9BVL2</id>
    </interactant>
    <interactant intactId="EBI-25830200">
        <id>Q6GQQ9-2</id>
        <label>OTUD7B</label>
    </interactant>
    <organismsDiffer>false</organismsDiffer>
    <experiments>3</experiments>
</comment>
<comment type="interaction">
    <interactant intactId="EBI-2811583">
        <id>Q9BVL2</id>
    </interactant>
    <interactant intactId="EBI-10488185">
        <id>Q9ULW8</id>
        <label>PADI3</label>
    </interactant>
    <organismsDiffer>false</organismsDiffer>
    <experiments>3</experiments>
</comment>
<comment type="interaction">
    <interactant intactId="EBI-2811583">
        <id>Q9BVL2</id>
    </interactant>
    <interactant intactId="EBI-2957445">
        <id>Q9BPZ3</id>
        <label>PAIP2</label>
    </interactant>
    <organismsDiffer>false</organismsDiffer>
    <experiments>3</experiments>
</comment>
<comment type="interaction">
    <interactant intactId="EBI-2811583">
        <id>Q9BVL2</id>
    </interactant>
    <interactant intactId="EBI-22012354">
        <id>Q9BR81</id>
        <label>PCDHGC3</label>
    </interactant>
    <organismsDiffer>false</organismsDiffer>
    <experiments>3</experiments>
</comment>
<comment type="interaction">
    <interactant intactId="EBI-2811583">
        <id>Q9BVL2</id>
    </interactant>
    <interactant intactId="EBI-17630288">
        <id>P57054</id>
        <label>PIGP</label>
    </interactant>
    <organismsDiffer>false</organismsDiffer>
    <experiments>3</experiments>
</comment>
<comment type="interaction">
    <interactant intactId="EBI-2811583">
        <id>Q9BVL2</id>
    </interactant>
    <interactant intactId="EBI-1373569">
        <id>P55347</id>
        <label>PKNOX1</label>
    </interactant>
    <organismsDiffer>false</organismsDiffer>
    <experiments>6</experiments>
</comment>
<comment type="interaction">
    <interactant intactId="EBI-2811583">
        <id>Q9BVL2</id>
    </interactant>
    <interactant intactId="EBI-2692890">
        <id>Q96KN3</id>
        <label>PKNOX2</label>
    </interactant>
    <organismsDiffer>false</organismsDiffer>
    <experiments>3</experiments>
</comment>
<comment type="interaction">
    <interactant intactId="EBI-2811583">
        <id>Q9BVL2</id>
    </interactant>
    <interactant intactId="EBI-713832">
        <id>Q6P1K2</id>
        <label>PMF1</label>
    </interactant>
    <organismsDiffer>false</organismsDiffer>
    <experiments>3</experiments>
</comment>
<comment type="interaction">
    <interactant intactId="EBI-2811583">
        <id>Q9BVL2</id>
    </interactant>
    <interactant intactId="EBI-25879276">
        <id>Q8N490-3</id>
        <label>PNKD</label>
    </interactant>
    <organismsDiffer>false</organismsDiffer>
    <experiments>3</experiments>
</comment>
<comment type="interaction">
    <interactant intactId="EBI-2811583">
        <id>Q9BVL2</id>
    </interactant>
    <interactant intactId="EBI-25835994">
        <id>Q6ZMI0-5</id>
        <label>PPP1R21</label>
    </interactant>
    <organismsDiffer>false</organismsDiffer>
    <experiments>3</experiments>
</comment>
<comment type="interaction">
    <interactant intactId="EBI-2811583">
        <id>Q9BVL2</id>
    </interactant>
    <interactant intactId="EBI-359710">
        <id>P35998</id>
        <label>PSMC2</label>
    </interactant>
    <organismsDiffer>false</organismsDiffer>
    <experiments>3</experiments>
</comment>
<comment type="interaction">
    <interactant intactId="EBI-2811583">
        <id>Q9BVL2</id>
    </interactant>
    <interactant intactId="EBI-745810">
        <id>Q96EN9</id>
        <label>REX1BD</label>
    </interactant>
    <organismsDiffer>false</organismsDiffer>
    <experiments>3</experiments>
</comment>
<comment type="interaction">
    <interactant intactId="EBI-2811583">
        <id>Q9BVL2</id>
    </interactant>
    <interactant intactId="EBI-25834767">
        <id>P47804-3</id>
        <label>RGR</label>
    </interactant>
    <organismsDiffer>false</organismsDiffer>
    <experiments>3</experiments>
</comment>
<comment type="interaction">
    <interactant intactId="EBI-2811583">
        <id>Q9BVL2</id>
    </interactant>
    <interactant intactId="EBI-948111">
        <id>Q96EP0</id>
        <label>RNF31</label>
    </interactant>
    <organismsDiffer>false</organismsDiffer>
    <experiments>3</experiments>
</comment>
<comment type="interaction">
    <interactant intactId="EBI-2811583">
        <id>Q9BVL2</id>
    </interactant>
    <interactant intactId="EBI-25837959">
        <id>Q9BY12-3</id>
        <label>SCAPER</label>
    </interactant>
    <organismsDiffer>false</organismsDiffer>
    <experiments>3</experiments>
</comment>
<comment type="interaction">
    <interactant intactId="EBI-2811583">
        <id>Q9BVL2</id>
    </interactant>
    <interactant intactId="EBI-358489">
        <id>Q96GM5</id>
        <label>SMARCD1</label>
    </interactant>
    <organismsDiffer>false</organismsDiffer>
    <experiments>3</experiments>
</comment>
<comment type="interaction">
    <interactant intactId="EBI-2811583">
        <id>Q9BVL2</id>
    </interactant>
    <interactant intactId="EBI-10696971">
        <id>Q7Z6I5</id>
        <label>SPATA12</label>
    </interactant>
    <organismsDiffer>false</organismsDiffer>
    <experiments>3</experiments>
</comment>
<comment type="interaction">
    <interactant intactId="EBI-2811583">
        <id>Q9BVL2</id>
    </interactant>
    <interactant intactId="EBI-12025738">
        <id>Q92783-2</id>
        <label>STAM</label>
    </interactant>
    <organismsDiffer>false</organismsDiffer>
    <experiments>3</experiments>
</comment>
<comment type="interaction">
    <interactant intactId="EBI-2811583">
        <id>Q9BVL2</id>
    </interactant>
    <interactant intactId="EBI-373258">
        <id>O75886</id>
        <label>STAM2</label>
    </interactant>
    <organismsDiffer>false</organismsDiffer>
    <experiments>3</experiments>
</comment>
<comment type="interaction">
    <interactant intactId="EBI-2811583">
        <id>Q9BVL2</id>
    </interactant>
    <interactant intactId="EBI-1186538">
        <id>Q14765</id>
        <label>STAT4</label>
    </interactant>
    <organismsDiffer>false</organismsDiffer>
    <experiments>3</experiments>
</comment>
<comment type="interaction">
    <interactant intactId="EBI-2811583">
        <id>Q9BVL2</id>
    </interactant>
    <interactant intactId="EBI-8484990">
        <id>Q8N4C7</id>
        <label>STX19</label>
    </interactant>
    <organismsDiffer>false</organismsDiffer>
    <experiments>3</experiments>
</comment>
<comment type="interaction">
    <interactant intactId="EBI-2811583">
        <id>Q9BVL2</id>
    </interactant>
    <interactant intactId="EBI-10283466">
        <id>A1L190</id>
        <label>SYCE3</label>
    </interactant>
    <organismsDiffer>false</organismsDiffer>
    <experiments>3</experiments>
</comment>
<comment type="interaction">
    <interactant intactId="EBI-2811583">
        <id>Q9BVL2</id>
    </interactant>
    <interactant intactId="EBI-473249">
        <id>O75528</id>
        <label>TADA3</label>
    </interactant>
    <organismsDiffer>false</organismsDiffer>
    <experiments>3</experiments>
</comment>
<comment type="interaction">
    <interactant intactId="EBI-2811583">
        <id>Q9BVL2</id>
    </interactant>
    <interactant intactId="EBI-2562799">
        <id>Q86WV5</id>
        <label>TEN1</label>
    </interactant>
    <organismsDiffer>false</organismsDiffer>
    <experiments>3</experiments>
</comment>
<comment type="interaction">
    <interactant intactId="EBI-2811583">
        <id>Q9BVL2</id>
    </interactant>
    <interactant intactId="EBI-12090309">
        <id>Q9BXU0</id>
        <label>TEX12</label>
    </interactant>
    <organismsDiffer>false</organismsDiffer>
    <experiments>3</experiments>
</comment>
<comment type="interaction">
    <interactant intactId="EBI-2811583">
        <id>Q9BVL2</id>
    </interactant>
    <interactant intactId="EBI-9089156">
        <id>Q8IUR5-4</id>
        <label>TMTC1</label>
    </interactant>
    <organismsDiffer>false</organismsDiffer>
    <experiments>3</experiments>
</comment>
<comment type="interaction">
    <interactant intactId="EBI-2811583">
        <id>Q9BVL2</id>
    </interactant>
    <interactant intactId="EBI-359224">
        <id>Q13077</id>
        <label>TRAF1</label>
    </interactant>
    <organismsDiffer>false</organismsDiffer>
    <experiments>9</experiments>
</comment>
<comment type="interaction">
    <interactant intactId="EBI-2811583">
        <id>Q9BVL2</id>
    </interactant>
    <interactant intactId="EBI-11525489">
        <id>Q86WT6-2</id>
        <label>TRIM69</label>
    </interactant>
    <organismsDiffer>false</organismsDiffer>
    <experiments>3</experiments>
</comment>
<comment type="interaction">
    <interactant intactId="EBI-2811583">
        <id>Q9BVL2</id>
    </interactant>
    <interactant intactId="EBI-740411">
        <id>Q96A04</id>
        <label>TSACC</label>
    </interactant>
    <organismsDiffer>false</organismsDiffer>
    <experiments>3</experiments>
</comment>
<comment type="interaction">
    <interactant intactId="EBI-2811583">
        <id>Q9BVL2</id>
    </interactant>
    <interactant intactId="EBI-12806590">
        <id>Q86WV8</id>
        <label>TSC1</label>
    </interactant>
    <organismsDiffer>false</organismsDiffer>
    <experiments>3</experiments>
</comment>
<comment type="interaction">
    <interactant intactId="EBI-2811583">
        <id>Q9BVL2</id>
    </interactant>
    <interactant intactId="EBI-21353855">
        <id>Q99598</id>
        <label>TSNAX</label>
    </interactant>
    <organismsDiffer>false</organismsDiffer>
    <experiments>3</experiments>
</comment>
<comment type="interaction">
    <interactant intactId="EBI-2811583">
        <id>Q9BVL2</id>
    </interactant>
    <interactant intactId="EBI-3914288">
        <id>O60636</id>
        <label>TSPAN2</label>
    </interactant>
    <organismsDiffer>false</organismsDiffer>
    <experiments>3</experiments>
</comment>
<comment type="interaction">
    <interactant intactId="EBI-2811583">
        <id>Q9BVL2</id>
    </interactant>
    <interactant intactId="EBI-2555404">
        <id>Q6PID6</id>
        <label>TTC33</label>
    </interactant>
    <organismsDiffer>false</organismsDiffer>
    <experiments>3</experiments>
</comment>
<comment type="interaction">
    <interactant intactId="EBI-2811583">
        <id>Q9BVL2</id>
    </interactant>
    <interactant intactId="EBI-2339348">
        <id>P49459</id>
        <label>UBE2A</label>
    </interactant>
    <organismsDiffer>false</organismsDiffer>
    <experiments>3</experiments>
</comment>
<comment type="interaction">
    <interactant intactId="EBI-2811583">
        <id>Q9BVL2</id>
    </interactant>
    <interactant intactId="EBI-10173939">
        <id>Q9UMX0-2</id>
        <label>UBQLN1</label>
    </interactant>
    <organismsDiffer>false</organismsDiffer>
    <experiments>3</experiments>
</comment>
<comment type="interaction">
    <interactant intactId="EBI-2811583">
        <id>Q9BVL2</id>
    </interactant>
    <interactant intactId="EBI-947187">
        <id>Q9UHD9</id>
        <label>UBQLN2</label>
    </interactant>
    <organismsDiffer>false</organismsDiffer>
    <experiments>3</experiments>
</comment>
<comment type="interaction">
    <interactant intactId="EBI-2811583">
        <id>Q9BVL2</id>
    </interactant>
    <interactant intactId="EBI-25832660">
        <id>Q9H347</id>
        <label>UBQLN3</label>
    </interactant>
    <organismsDiffer>false</organismsDiffer>
    <experiments>3</experiments>
</comment>
<comment type="interaction">
    <interactant intactId="EBI-2811583">
        <id>Q9BVL2</id>
    </interactant>
    <interactant intactId="EBI-2850578">
        <id>Q8NEZ2</id>
        <label>VPS37A</label>
    </interactant>
    <organismsDiffer>false</organismsDiffer>
    <experiments>3</experiments>
</comment>
<comment type="interaction">
    <interactant intactId="EBI-2811583">
        <id>Q9BVL2</id>
    </interactant>
    <interactant intactId="EBI-6427899">
        <id>P58304</id>
        <label>VSX2</label>
    </interactant>
    <organismsDiffer>false</organismsDiffer>
    <experiments>3</experiments>
</comment>
<comment type="interaction">
    <interactant intactId="EBI-2811583">
        <id>Q9BVL2</id>
    </interactant>
    <interactant intactId="EBI-21659356">
        <id>Q86U90</id>
        <label>YRDC</label>
    </interactant>
    <organismsDiffer>false</organismsDiffer>
    <experiments>3</experiments>
</comment>
<comment type="interaction">
    <interactant intactId="EBI-2811583">
        <id>Q9BVL2</id>
    </interactant>
    <interactant intactId="EBI-12956041">
        <id>Q8IWT0-2</id>
        <label>ZBTB8OS</label>
    </interactant>
    <organismsDiffer>false</organismsDiffer>
    <experiments>3</experiments>
</comment>
<comment type="interaction">
    <interactant intactId="EBI-2811583">
        <id>Q9BVL2</id>
    </interactant>
    <interactant intactId="EBI-25831733">
        <id>Q96MN9-2</id>
        <label>ZNF488</label>
    </interactant>
    <organismsDiffer>false</organismsDiffer>
    <experiments>3</experiments>
</comment>
<comment type="interaction">
    <interactant intactId="EBI-2811583">
        <id>Q9BVL2</id>
    </interactant>
    <interactant intactId="EBI-1001132">
        <id>O95229</id>
        <label>ZWINT</label>
    </interactant>
    <organismsDiffer>false</organismsDiffer>
    <experiments>3</experiments>
</comment>
<comment type="interaction">
    <interactant intactId="EBI-2811583">
        <id>Q9BVL2</id>
    </interactant>
    <interactant intactId="EBI-25831617">
        <id>B7Z3E8</id>
    </interactant>
    <organismsDiffer>false</organismsDiffer>
    <experiments>3</experiments>
</comment>
<comment type="subcellular location">
    <subcellularLocation>
        <location evidence="2">Nucleus</location>
        <location evidence="2">Nuclear pore complex</location>
    </subcellularLocation>
    <subcellularLocation>
        <location evidence="2">Nucleus membrane</location>
        <topology evidence="2">Peripheral membrane protein</topology>
        <orientation evidence="2">Cytoplasmic side</orientation>
    </subcellularLocation>
    <subcellularLocation>
        <location evidence="2">Nucleus membrane</location>
        <topology evidence="2">Peripheral membrane protein</topology>
        <orientation evidence="2">Nucleoplasmic side</orientation>
    </subcellularLocation>
    <text evidence="2">Biased towards cytoplasmic side. Central region of the nuclear pore complex, within the transporter.</text>
</comment>
<comment type="alternative products">
    <event type="alternative splicing"/>
    <isoform>
        <id>Q9BVL2-1</id>
        <name>1</name>
        <name>p58</name>
        <sequence type="displayed"/>
    </isoform>
    <isoform>
        <id>Q9BVL2-2</id>
        <name>2</name>
        <sequence type="described" ref="VSP_007946 VSP_007947"/>
    </isoform>
    <isoform>
        <id>Q9BVL2-3</id>
        <name>3</name>
        <sequence type="described" ref="VSP_045658"/>
    </isoform>
</comment>
<comment type="domain">
    <text evidence="8">Contains FG repeats. FG repeats are interaction sites for karyopherins (importins, exportins) and form probably an affinity gradient, guiding the transport proteins unidirectionally with their cargo through the NPC. FG repeat regions are highly flexible and lack ordered secondary structure. The overall conservation of FG repeats regarding exact sequence, spacing, and repeat unit length is limited.</text>
</comment>
<comment type="PTM">
    <text evidence="1">O-glycosylated.</text>
</comment>
<comment type="miscellaneous">
    <text>In rat, the p62 complex contains two different isoforms of NUP58. Isoform p45 has however not been isolated in human so far.</text>
</comment>
<comment type="similarity">
    <text evidence="8">Belongs to the NUP58 family.</text>
</comment>
<comment type="sequence caution" evidence="8">
    <conflict type="erroneous initiation">
        <sequence resource="EMBL-CDS" id="BAA23706"/>
    </conflict>
</comment>
<proteinExistence type="evidence at protein level"/>
<feature type="chain" id="PRO_0000204892" description="Nucleoporin p58/p45">
    <location>
        <begin position="1"/>
        <end position="599"/>
    </location>
</feature>
<feature type="repeat" description="1">
    <location>
        <begin position="7"/>
        <end position="8"/>
    </location>
</feature>
<feature type="repeat" description="2">
    <location>
        <begin position="30"/>
        <end position="31"/>
    </location>
</feature>
<feature type="repeat" description="3">
    <location>
        <begin position="44"/>
        <end position="45"/>
    </location>
</feature>
<feature type="repeat" description="4">
    <location>
        <begin position="63"/>
        <end position="64"/>
    </location>
</feature>
<feature type="repeat" description="5">
    <location>
        <begin position="68"/>
        <end position="69"/>
    </location>
</feature>
<feature type="repeat" description="6">
    <location>
        <begin position="488"/>
        <end position="489"/>
    </location>
</feature>
<feature type="repeat" description="7">
    <location>
        <begin position="492"/>
        <end position="493"/>
    </location>
</feature>
<feature type="repeat" description="8">
    <location>
        <begin position="513"/>
        <end position="514"/>
    </location>
</feature>
<feature type="repeat" description="9">
    <location>
        <begin position="519"/>
        <end position="520"/>
    </location>
</feature>
<feature type="repeat" description="10">
    <location>
        <begin position="529"/>
        <end position="530"/>
    </location>
</feature>
<feature type="repeat" description="11">
    <location>
        <begin position="531"/>
        <end position="532"/>
    </location>
</feature>
<feature type="repeat" description="12">
    <location>
        <begin position="545"/>
        <end position="546"/>
    </location>
</feature>
<feature type="repeat" description="13">
    <location>
        <begin position="568"/>
        <end position="569"/>
    </location>
</feature>
<feature type="repeat" description="14">
    <location>
        <begin position="578"/>
        <end position="579"/>
    </location>
</feature>
<feature type="region of interest" description="14 X 2 AA repeats of F-G">
    <location>
        <begin position="7"/>
        <end position="579"/>
    </location>
</feature>
<feature type="region of interest" description="Disordered" evidence="4">
    <location>
        <begin position="213"/>
        <end position="247"/>
    </location>
</feature>
<feature type="region of interest" description="Disordered" evidence="4">
    <location>
        <begin position="579"/>
        <end position="599"/>
    </location>
</feature>
<feature type="coiled-coil region" evidence="3">
    <location>
        <begin position="256"/>
        <end position="276"/>
    </location>
</feature>
<feature type="coiled-coil region" evidence="3">
    <location>
        <begin position="314"/>
        <end position="381"/>
    </location>
</feature>
<feature type="compositionally biased region" description="Basic and acidic residues" evidence="4">
    <location>
        <begin position="225"/>
        <end position="246"/>
    </location>
</feature>
<feature type="modified residue" description="Phosphothreonine" evidence="10 11 12">
    <location>
        <position position="331"/>
    </location>
</feature>
<feature type="splice variant" id="VSP_045658" description="In isoform 3." evidence="6">
    <location>
        <begin position="84"/>
        <end position="95"/>
    </location>
</feature>
<feature type="splice variant" id="VSP_007946" description="In isoform 2." evidence="7">
    <original>PQPSLG</original>
    <variation>LNAFKL</variation>
    <location>
        <begin position="480"/>
        <end position="485"/>
    </location>
</feature>
<feature type="splice variant" id="VSP_007947" description="In isoform 2." evidence="7">
    <location>
        <begin position="486"/>
        <end position="599"/>
    </location>
</feature>
<feature type="sequence variant" id="VAR_050570" description="In dbSNP:rs11556093." evidence="5">
    <original>A</original>
    <variation>T</variation>
    <location>
        <position position="34"/>
    </location>
</feature>
<feature type="sequence variant" id="VAR_050571" description="In dbSNP:rs12871608.">
    <original>S</original>
    <variation>P</variation>
    <location>
        <position position="166"/>
    </location>
</feature>
<feature type="helix" evidence="13">
    <location>
        <begin position="345"/>
        <end position="371"/>
    </location>
</feature>
<feature type="turn" evidence="14">
    <location>
        <begin position="372"/>
        <end position="376"/>
    </location>
</feature>
<feature type="helix" evidence="13">
    <location>
        <begin position="382"/>
        <end position="424"/>
    </location>
</feature>
<name>NUP58_HUMAN</name>
<gene>
    <name evidence="9" type="primary">NUP58</name>
    <name type="synonym">KIAA0410</name>
    <name type="synonym">NUPL1</name>
</gene>
<reference key="1">
    <citation type="journal article" date="1997" name="DNA Res.">
        <title>Prediction of the coding sequences of unidentified human genes. VIII. 78 new cDNA clones from brain which code for large proteins in vitro.</title>
        <authorList>
            <person name="Ishikawa K."/>
            <person name="Nagase T."/>
            <person name="Nakajima D."/>
            <person name="Seki N."/>
            <person name="Ohira M."/>
            <person name="Miyajima N."/>
            <person name="Tanaka A."/>
            <person name="Kotani H."/>
            <person name="Nomura N."/>
            <person name="Ohara O."/>
        </authorList>
    </citation>
    <scope>NUCLEOTIDE SEQUENCE [LARGE SCALE MRNA] (ISOFORM 2)</scope>
    <source>
        <tissue>Brain</tissue>
    </source>
</reference>
<reference key="2">
    <citation type="journal article" date="2004" name="Nat. Genet.">
        <title>Complete sequencing and characterization of 21,243 full-length human cDNAs.</title>
        <authorList>
            <person name="Ota T."/>
            <person name="Suzuki Y."/>
            <person name="Nishikawa T."/>
            <person name="Otsuki T."/>
            <person name="Sugiyama T."/>
            <person name="Irie R."/>
            <person name="Wakamatsu A."/>
            <person name="Hayashi K."/>
            <person name="Sato H."/>
            <person name="Nagai K."/>
            <person name="Kimura K."/>
            <person name="Makita H."/>
            <person name="Sekine M."/>
            <person name="Obayashi M."/>
            <person name="Nishi T."/>
            <person name="Shibahara T."/>
            <person name="Tanaka T."/>
            <person name="Ishii S."/>
            <person name="Yamamoto J."/>
            <person name="Saito K."/>
            <person name="Kawai Y."/>
            <person name="Isono Y."/>
            <person name="Nakamura Y."/>
            <person name="Nagahari K."/>
            <person name="Murakami K."/>
            <person name="Yasuda T."/>
            <person name="Iwayanagi T."/>
            <person name="Wagatsuma M."/>
            <person name="Shiratori A."/>
            <person name="Sudo H."/>
            <person name="Hosoiri T."/>
            <person name="Kaku Y."/>
            <person name="Kodaira H."/>
            <person name="Kondo H."/>
            <person name="Sugawara M."/>
            <person name="Takahashi M."/>
            <person name="Kanda K."/>
            <person name="Yokoi T."/>
            <person name="Furuya T."/>
            <person name="Kikkawa E."/>
            <person name="Omura Y."/>
            <person name="Abe K."/>
            <person name="Kamihara K."/>
            <person name="Katsuta N."/>
            <person name="Sato K."/>
            <person name="Tanikawa M."/>
            <person name="Yamazaki M."/>
            <person name="Ninomiya K."/>
            <person name="Ishibashi T."/>
            <person name="Yamashita H."/>
            <person name="Murakawa K."/>
            <person name="Fujimori K."/>
            <person name="Tanai H."/>
            <person name="Kimata M."/>
            <person name="Watanabe M."/>
            <person name="Hiraoka S."/>
            <person name="Chiba Y."/>
            <person name="Ishida S."/>
            <person name="Ono Y."/>
            <person name="Takiguchi S."/>
            <person name="Watanabe S."/>
            <person name="Yosida M."/>
            <person name="Hotuta T."/>
            <person name="Kusano J."/>
            <person name="Kanehori K."/>
            <person name="Takahashi-Fujii A."/>
            <person name="Hara H."/>
            <person name="Tanase T.-O."/>
            <person name="Nomura Y."/>
            <person name="Togiya S."/>
            <person name="Komai F."/>
            <person name="Hara R."/>
            <person name="Takeuchi K."/>
            <person name="Arita M."/>
            <person name="Imose N."/>
            <person name="Musashino K."/>
            <person name="Yuuki H."/>
            <person name="Oshima A."/>
            <person name="Sasaki N."/>
            <person name="Aotsuka S."/>
            <person name="Yoshikawa Y."/>
            <person name="Matsunawa H."/>
            <person name="Ichihara T."/>
            <person name="Shiohata N."/>
            <person name="Sano S."/>
            <person name="Moriya S."/>
            <person name="Momiyama H."/>
            <person name="Satoh N."/>
            <person name="Takami S."/>
            <person name="Terashima Y."/>
            <person name="Suzuki O."/>
            <person name="Nakagawa S."/>
            <person name="Senoh A."/>
            <person name="Mizoguchi H."/>
            <person name="Goto Y."/>
            <person name="Shimizu F."/>
            <person name="Wakebe H."/>
            <person name="Hishigaki H."/>
            <person name="Watanabe T."/>
            <person name="Sugiyama A."/>
            <person name="Takemoto M."/>
            <person name="Kawakami B."/>
            <person name="Yamazaki M."/>
            <person name="Watanabe K."/>
            <person name="Kumagai A."/>
            <person name="Itakura S."/>
            <person name="Fukuzumi Y."/>
            <person name="Fujimori Y."/>
            <person name="Komiyama M."/>
            <person name="Tashiro H."/>
            <person name="Tanigami A."/>
            <person name="Fujiwara T."/>
            <person name="Ono T."/>
            <person name="Yamada K."/>
            <person name="Fujii Y."/>
            <person name="Ozaki K."/>
            <person name="Hirao M."/>
            <person name="Ohmori Y."/>
            <person name="Kawabata A."/>
            <person name="Hikiji T."/>
            <person name="Kobatake N."/>
            <person name="Inagaki H."/>
            <person name="Ikema Y."/>
            <person name="Okamoto S."/>
            <person name="Okitani R."/>
            <person name="Kawakami T."/>
            <person name="Noguchi S."/>
            <person name="Itoh T."/>
            <person name="Shigeta K."/>
            <person name="Senba T."/>
            <person name="Matsumura K."/>
            <person name="Nakajima Y."/>
            <person name="Mizuno T."/>
            <person name="Morinaga M."/>
            <person name="Sasaki M."/>
            <person name="Togashi T."/>
            <person name="Oyama M."/>
            <person name="Hata H."/>
            <person name="Watanabe M."/>
            <person name="Komatsu T."/>
            <person name="Mizushima-Sugano J."/>
            <person name="Satoh T."/>
            <person name="Shirai Y."/>
            <person name="Takahashi Y."/>
            <person name="Nakagawa K."/>
            <person name="Okumura K."/>
            <person name="Nagase T."/>
            <person name="Nomura N."/>
            <person name="Kikuchi H."/>
            <person name="Masuho Y."/>
            <person name="Yamashita R."/>
            <person name="Nakai K."/>
            <person name="Yada T."/>
            <person name="Nakamura Y."/>
            <person name="Ohara O."/>
            <person name="Isogai T."/>
            <person name="Sugano S."/>
        </authorList>
    </citation>
    <scope>NUCLEOTIDE SEQUENCE [LARGE SCALE MRNA] (ISOFORM 3)</scope>
    <scope>VARIANT THR-34</scope>
    <source>
        <tissue>Testis</tissue>
    </source>
</reference>
<reference key="3">
    <citation type="journal article" date="2004" name="Nature">
        <title>The DNA sequence and analysis of human chromosome 13.</title>
        <authorList>
            <person name="Dunham A."/>
            <person name="Matthews L.H."/>
            <person name="Burton J."/>
            <person name="Ashurst J.L."/>
            <person name="Howe K.L."/>
            <person name="Ashcroft K.J."/>
            <person name="Beare D.M."/>
            <person name="Burford D.C."/>
            <person name="Hunt S.E."/>
            <person name="Griffiths-Jones S."/>
            <person name="Jones M.C."/>
            <person name="Keenan S.J."/>
            <person name="Oliver K."/>
            <person name="Scott C.E."/>
            <person name="Ainscough R."/>
            <person name="Almeida J.P."/>
            <person name="Ambrose K.D."/>
            <person name="Andrews D.T."/>
            <person name="Ashwell R.I.S."/>
            <person name="Babbage A.K."/>
            <person name="Bagguley C.L."/>
            <person name="Bailey J."/>
            <person name="Bannerjee R."/>
            <person name="Barlow K.F."/>
            <person name="Bates K."/>
            <person name="Beasley H."/>
            <person name="Bird C.P."/>
            <person name="Bray-Allen S."/>
            <person name="Brown A.J."/>
            <person name="Brown J.Y."/>
            <person name="Burrill W."/>
            <person name="Carder C."/>
            <person name="Carter N.P."/>
            <person name="Chapman J.C."/>
            <person name="Clamp M.E."/>
            <person name="Clark S.Y."/>
            <person name="Clarke G."/>
            <person name="Clee C.M."/>
            <person name="Clegg S.C."/>
            <person name="Cobley V."/>
            <person name="Collins J.E."/>
            <person name="Corby N."/>
            <person name="Coville G.J."/>
            <person name="Deloukas P."/>
            <person name="Dhami P."/>
            <person name="Dunham I."/>
            <person name="Dunn M."/>
            <person name="Earthrowl M.E."/>
            <person name="Ellington A.G."/>
            <person name="Faulkner L."/>
            <person name="Frankish A.G."/>
            <person name="Frankland J."/>
            <person name="French L."/>
            <person name="Garner P."/>
            <person name="Garnett J."/>
            <person name="Gilbert J.G.R."/>
            <person name="Gilson C.J."/>
            <person name="Ghori J."/>
            <person name="Grafham D.V."/>
            <person name="Gribble S.M."/>
            <person name="Griffiths C."/>
            <person name="Hall R.E."/>
            <person name="Hammond S."/>
            <person name="Harley J.L."/>
            <person name="Hart E.A."/>
            <person name="Heath P.D."/>
            <person name="Howden P.J."/>
            <person name="Huckle E.J."/>
            <person name="Hunt P.J."/>
            <person name="Hunt A.R."/>
            <person name="Johnson C."/>
            <person name="Johnson D."/>
            <person name="Kay M."/>
            <person name="Kimberley A.M."/>
            <person name="King A."/>
            <person name="Laird G.K."/>
            <person name="Langford C.J."/>
            <person name="Lawlor S."/>
            <person name="Leongamornlert D.A."/>
            <person name="Lloyd D.M."/>
            <person name="Lloyd C."/>
            <person name="Loveland J.E."/>
            <person name="Lovell J."/>
            <person name="Martin S."/>
            <person name="Mashreghi-Mohammadi M."/>
            <person name="McLaren S.J."/>
            <person name="McMurray A."/>
            <person name="Milne S."/>
            <person name="Moore M.J.F."/>
            <person name="Nickerson T."/>
            <person name="Palmer S.A."/>
            <person name="Pearce A.V."/>
            <person name="Peck A.I."/>
            <person name="Pelan S."/>
            <person name="Phillimore B."/>
            <person name="Porter K.M."/>
            <person name="Rice C.M."/>
            <person name="Searle S."/>
            <person name="Sehra H.K."/>
            <person name="Shownkeen R."/>
            <person name="Skuce C.D."/>
            <person name="Smith M."/>
            <person name="Steward C.A."/>
            <person name="Sycamore N."/>
            <person name="Tester J."/>
            <person name="Thomas D.W."/>
            <person name="Tracey A."/>
            <person name="Tromans A."/>
            <person name="Tubby B."/>
            <person name="Wall M."/>
            <person name="Wallis J.M."/>
            <person name="West A.P."/>
            <person name="Whitehead S.L."/>
            <person name="Willey D.L."/>
            <person name="Wilming L."/>
            <person name="Wray P.W."/>
            <person name="Wright M.W."/>
            <person name="Young L."/>
            <person name="Coulson A."/>
            <person name="Durbin R.M."/>
            <person name="Hubbard T."/>
            <person name="Sulston J.E."/>
            <person name="Beck S."/>
            <person name="Bentley D.R."/>
            <person name="Rogers J."/>
            <person name="Ross M.T."/>
        </authorList>
    </citation>
    <scope>NUCLEOTIDE SEQUENCE [LARGE SCALE GENOMIC DNA]</scope>
</reference>
<reference key="4">
    <citation type="journal article" date="2004" name="Genome Res.">
        <title>The status, quality, and expansion of the NIH full-length cDNA project: the Mammalian Gene Collection (MGC).</title>
        <authorList>
            <consortium name="The MGC Project Team"/>
        </authorList>
    </citation>
    <scope>NUCLEOTIDE SEQUENCE [LARGE SCALE MRNA] (ISOFORM 1)</scope>
    <source>
        <tissue>Placenta</tissue>
    </source>
</reference>
<reference key="5">
    <citation type="journal article" date="2010" name="Sci. Signal.">
        <title>Quantitative phosphoproteomics reveals widespread full phosphorylation site occupancy during mitosis.</title>
        <authorList>
            <person name="Olsen J.V."/>
            <person name="Vermeulen M."/>
            <person name="Santamaria A."/>
            <person name="Kumar C."/>
            <person name="Miller M.L."/>
            <person name="Jensen L.J."/>
            <person name="Gnad F."/>
            <person name="Cox J."/>
            <person name="Jensen T.S."/>
            <person name="Nigg E.A."/>
            <person name="Brunak S."/>
            <person name="Mann M."/>
        </authorList>
    </citation>
    <scope>PHOSPHORYLATION [LARGE SCALE ANALYSIS] AT THR-331</scope>
    <scope>IDENTIFICATION BY MASS SPECTROMETRY [LARGE SCALE ANALYSIS]</scope>
    <source>
        <tissue>Cervix carcinoma</tissue>
    </source>
</reference>
<reference key="6">
    <citation type="journal article" date="2011" name="BMC Syst. Biol.">
        <title>Initial characterization of the human central proteome.</title>
        <authorList>
            <person name="Burkard T.R."/>
            <person name="Planyavsky M."/>
            <person name="Kaupe I."/>
            <person name="Breitwieser F.P."/>
            <person name="Buerckstuemmer T."/>
            <person name="Bennett K.L."/>
            <person name="Superti-Furga G."/>
            <person name="Colinge J."/>
        </authorList>
    </citation>
    <scope>IDENTIFICATION BY MASS SPECTROMETRY [LARGE SCALE ANALYSIS]</scope>
</reference>
<reference key="7">
    <citation type="journal article" date="2013" name="J. Proteome Res.">
        <title>Toward a comprehensive characterization of a human cancer cell phosphoproteome.</title>
        <authorList>
            <person name="Zhou H."/>
            <person name="Di Palma S."/>
            <person name="Preisinger C."/>
            <person name="Peng M."/>
            <person name="Polat A.N."/>
            <person name="Heck A.J."/>
            <person name="Mohammed S."/>
        </authorList>
    </citation>
    <scope>PHOSPHORYLATION [LARGE SCALE ANALYSIS] AT THR-331</scope>
    <scope>IDENTIFICATION BY MASS SPECTROMETRY [LARGE SCALE ANALYSIS]</scope>
    <source>
        <tissue>Cervix carcinoma</tissue>
        <tissue>Erythroleukemia</tissue>
    </source>
</reference>
<reference key="8">
    <citation type="journal article" date="2014" name="J. Proteomics">
        <title>An enzyme assisted RP-RPLC approach for in-depth analysis of human liver phosphoproteome.</title>
        <authorList>
            <person name="Bian Y."/>
            <person name="Song C."/>
            <person name="Cheng K."/>
            <person name="Dong M."/>
            <person name="Wang F."/>
            <person name="Huang J."/>
            <person name="Sun D."/>
            <person name="Wang L."/>
            <person name="Ye M."/>
            <person name="Zou H."/>
        </authorList>
    </citation>
    <scope>PHOSPHORYLATION [LARGE SCALE ANALYSIS] AT THR-331</scope>
    <scope>IDENTIFICATION BY MASS SPECTROMETRY [LARGE SCALE ANALYSIS]</scope>
    <source>
        <tissue>Liver</tissue>
    </source>
</reference>
<dbReference type="EMBL" id="AB007870">
    <property type="protein sequence ID" value="BAA23706.2"/>
    <property type="status" value="ALT_INIT"/>
    <property type="molecule type" value="mRNA"/>
</dbReference>
<dbReference type="EMBL" id="AK302946">
    <property type="protein sequence ID" value="BAG64103.1"/>
    <property type="molecule type" value="mRNA"/>
</dbReference>
<dbReference type="EMBL" id="AL138958">
    <property type="status" value="NOT_ANNOTATED_CDS"/>
    <property type="molecule type" value="Genomic_DNA"/>
</dbReference>
<dbReference type="EMBL" id="AL590787">
    <property type="status" value="NOT_ANNOTATED_CDS"/>
    <property type="molecule type" value="Genomic_DNA"/>
</dbReference>
<dbReference type="EMBL" id="AL646102">
    <property type="status" value="NOT_ANNOTATED_CDS"/>
    <property type="molecule type" value="Genomic_DNA"/>
</dbReference>
<dbReference type="EMBL" id="BC001104">
    <property type="protein sequence ID" value="AAH01104.1"/>
    <property type="molecule type" value="mRNA"/>
</dbReference>
<dbReference type="CCDS" id="CCDS31949.1">
    <molecule id="Q9BVL2-3"/>
</dbReference>
<dbReference type="CCDS" id="CCDS9314.1">
    <molecule id="Q9BVL2-1"/>
</dbReference>
<dbReference type="RefSeq" id="NP_001008564.1">
    <molecule id="Q9BVL2-3"/>
    <property type="nucleotide sequence ID" value="NM_001008564.2"/>
</dbReference>
<dbReference type="RefSeq" id="NP_054808.1">
    <molecule id="Q9BVL2-1"/>
    <property type="nucleotide sequence ID" value="NM_014089.4"/>
</dbReference>
<dbReference type="PDB" id="4JO7">
    <property type="method" value="X-ray"/>
    <property type="resolution" value="1.75 A"/>
    <property type="chains" value="A/C/E/G=341-428"/>
</dbReference>
<dbReference type="PDB" id="4JO9">
    <property type="method" value="X-ray"/>
    <property type="resolution" value="2.50 A"/>
    <property type="chains" value="B=341-426"/>
</dbReference>
<dbReference type="PDB" id="4JQ5">
    <property type="method" value="X-ray"/>
    <property type="resolution" value="2.20 A"/>
    <property type="chains" value="A/B/C/D/E/F/G/H/I/J/K/L=341-425"/>
</dbReference>
<dbReference type="PDB" id="5IJN">
    <property type="method" value="EM"/>
    <property type="resolution" value="21.40 A"/>
    <property type="chains" value="G/M/S/Y=1-599"/>
</dbReference>
<dbReference type="PDB" id="5IJO">
    <property type="method" value="EM"/>
    <property type="resolution" value="21.40 A"/>
    <property type="chains" value="G/M/S/Y=1-599"/>
</dbReference>
<dbReference type="PDB" id="7PER">
    <property type="method" value="EM"/>
    <property type="resolution" value="35.00 A"/>
    <property type="chains" value="G/M/S/Y=1-599"/>
</dbReference>
<dbReference type="PDB" id="7R5J">
    <property type="method" value="EM"/>
    <property type="resolution" value="50.00 A"/>
    <property type="chains" value="I0/I1/I2/I3=1-599"/>
</dbReference>
<dbReference type="PDB" id="7R5K">
    <property type="method" value="EM"/>
    <property type="resolution" value="12.00 A"/>
    <property type="chains" value="I0/I1/I2/I3=1-599"/>
</dbReference>
<dbReference type="PDBsum" id="4JO7"/>
<dbReference type="PDBsum" id="4JO9"/>
<dbReference type="PDBsum" id="4JQ5"/>
<dbReference type="PDBsum" id="5IJN"/>
<dbReference type="PDBsum" id="5IJO"/>
<dbReference type="PDBsum" id="7PER"/>
<dbReference type="PDBsum" id="7R5J"/>
<dbReference type="PDBsum" id="7R5K"/>
<dbReference type="EMDB" id="EMD-14321"/>
<dbReference type="EMDB" id="EMD-14322"/>
<dbReference type="SMR" id="Q9BVL2"/>
<dbReference type="BioGRID" id="115157">
    <property type="interactions" value="109"/>
</dbReference>
<dbReference type="ComplexPortal" id="CPX-873">
    <property type="entry name" value="Nuclear pore complex"/>
</dbReference>
<dbReference type="CORUM" id="Q9BVL2"/>
<dbReference type="FunCoup" id="Q9BVL2">
    <property type="interactions" value="2543"/>
</dbReference>
<dbReference type="IntAct" id="Q9BVL2">
    <property type="interactions" value="154"/>
</dbReference>
<dbReference type="MINT" id="Q9BVL2"/>
<dbReference type="STRING" id="9606.ENSP00000371155"/>
<dbReference type="TCDB" id="1.I.1.1.3">
    <property type="family name" value="the nuclear pore complex (npc) family"/>
</dbReference>
<dbReference type="GlyCosmos" id="Q9BVL2">
    <property type="glycosylation" value="54 sites, 2 glycans"/>
</dbReference>
<dbReference type="GlyGen" id="Q9BVL2">
    <property type="glycosylation" value="59 sites, 2 O-linked glycans (59 sites)"/>
</dbReference>
<dbReference type="iPTMnet" id="Q9BVL2"/>
<dbReference type="MetOSite" id="Q9BVL2"/>
<dbReference type="PhosphoSitePlus" id="Q9BVL2"/>
<dbReference type="SwissPalm" id="Q9BVL2"/>
<dbReference type="BioMuta" id="NUP58"/>
<dbReference type="DMDM" id="44888845"/>
<dbReference type="jPOST" id="Q9BVL2"/>
<dbReference type="MassIVE" id="Q9BVL2"/>
<dbReference type="PaxDb" id="9606-ENSP00000371155"/>
<dbReference type="PeptideAtlas" id="Q9BVL2"/>
<dbReference type="ProteomicsDB" id="1238"/>
<dbReference type="ProteomicsDB" id="79216">
    <molecule id="Q9BVL2-1"/>
</dbReference>
<dbReference type="ProteomicsDB" id="79217">
    <molecule id="Q9BVL2-2"/>
</dbReference>
<dbReference type="Pumba" id="Q9BVL2"/>
<dbReference type="Antibodypedia" id="22561">
    <property type="antibodies" value="83 antibodies from 23 providers"/>
</dbReference>
<dbReference type="DNASU" id="9818"/>
<dbReference type="Ensembl" id="ENST00000381718.8">
    <molecule id="Q9BVL2-3"/>
    <property type="protein sequence ID" value="ENSP00000371137.3"/>
    <property type="gene ID" value="ENSG00000139496.18"/>
</dbReference>
<dbReference type="Ensembl" id="ENST00000381736.8">
    <molecule id="Q9BVL2-1"/>
    <property type="protein sequence ID" value="ENSP00000371155.3"/>
    <property type="gene ID" value="ENSG00000139496.18"/>
</dbReference>
<dbReference type="Ensembl" id="ENST00000463407.6">
    <molecule id="Q9BVL2-2"/>
    <property type="protein sequence ID" value="ENSP00000418555.1"/>
    <property type="gene ID" value="ENSG00000139496.18"/>
</dbReference>
<dbReference type="GeneID" id="9818"/>
<dbReference type="KEGG" id="hsa:9818"/>
<dbReference type="MANE-Select" id="ENST00000381736.8">
    <property type="protein sequence ID" value="ENSP00000371155.3"/>
    <property type="RefSeq nucleotide sequence ID" value="NM_014089.4"/>
    <property type="RefSeq protein sequence ID" value="NP_054808.1"/>
</dbReference>
<dbReference type="UCSC" id="uc001uqg.2">
    <molecule id="Q9BVL2-1"/>
    <property type="organism name" value="human"/>
</dbReference>
<dbReference type="AGR" id="HGNC:20261"/>
<dbReference type="CTD" id="9818"/>
<dbReference type="DisGeNET" id="9818"/>
<dbReference type="GeneCards" id="NUP58"/>
<dbReference type="HGNC" id="HGNC:20261">
    <property type="gene designation" value="NUP58"/>
</dbReference>
<dbReference type="HPA" id="ENSG00000139496">
    <property type="expression patterns" value="Low tissue specificity"/>
</dbReference>
<dbReference type="MIM" id="607615">
    <property type="type" value="gene"/>
</dbReference>
<dbReference type="neXtProt" id="NX_Q9BVL2"/>
<dbReference type="OpenTargets" id="ENSG00000139496"/>
<dbReference type="PharmGKB" id="PA134981903"/>
<dbReference type="VEuPathDB" id="HostDB:ENSG00000139496"/>
<dbReference type="eggNOG" id="ENOG502QRD8">
    <property type="taxonomic scope" value="Eukaryota"/>
</dbReference>
<dbReference type="GeneTree" id="ENSGT00730000111111"/>
<dbReference type="HOGENOM" id="CLU_034851_2_0_1"/>
<dbReference type="InParanoid" id="Q9BVL2"/>
<dbReference type="OMA" id="RDNTDVF"/>
<dbReference type="OrthoDB" id="2538017at2759"/>
<dbReference type="PAN-GO" id="Q9BVL2">
    <property type="GO annotations" value="3 GO annotations based on evolutionary models"/>
</dbReference>
<dbReference type="PhylomeDB" id="Q9BVL2"/>
<dbReference type="TreeFam" id="TF106502"/>
<dbReference type="PathwayCommons" id="Q9BVL2"/>
<dbReference type="Reactome" id="R-HSA-1169408">
    <property type="pathway name" value="ISG15 antiviral mechanism"/>
</dbReference>
<dbReference type="Reactome" id="R-HSA-159227">
    <property type="pathway name" value="Transport of the SLBP independent Mature mRNA"/>
</dbReference>
<dbReference type="Reactome" id="R-HSA-159230">
    <property type="pathway name" value="Transport of the SLBP Dependant Mature mRNA"/>
</dbReference>
<dbReference type="Reactome" id="R-HSA-159231">
    <property type="pathway name" value="Transport of Mature mRNA Derived from an Intronless Transcript"/>
</dbReference>
<dbReference type="Reactome" id="R-HSA-159236">
    <property type="pathway name" value="Transport of Mature mRNA derived from an Intron-Containing Transcript"/>
</dbReference>
<dbReference type="Reactome" id="R-HSA-165054">
    <property type="pathway name" value="Rev-mediated nuclear export of HIV RNA"/>
</dbReference>
<dbReference type="Reactome" id="R-HSA-168271">
    <property type="pathway name" value="Transport of Ribonucleoproteins into the Host Nucleus"/>
</dbReference>
<dbReference type="Reactome" id="R-HSA-168276">
    <property type="pathway name" value="NS1 Mediated Effects on Host Pathways"/>
</dbReference>
<dbReference type="Reactome" id="R-HSA-168325">
    <property type="pathway name" value="Viral Messenger RNA Synthesis"/>
</dbReference>
<dbReference type="Reactome" id="R-HSA-168333">
    <property type="pathway name" value="NEP/NS2 Interacts with the Cellular Export Machinery"/>
</dbReference>
<dbReference type="Reactome" id="R-HSA-170822">
    <property type="pathway name" value="Regulation of Glucokinase by Glucokinase Regulatory Protein"/>
</dbReference>
<dbReference type="Reactome" id="R-HSA-180746">
    <property type="pathway name" value="Nuclear import of Rev protein"/>
</dbReference>
<dbReference type="Reactome" id="R-HSA-180910">
    <property type="pathway name" value="Vpr-mediated nuclear import of PICs"/>
</dbReference>
<dbReference type="Reactome" id="R-HSA-191859">
    <property type="pathway name" value="snRNP Assembly"/>
</dbReference>
<dbReference type="Reactome" id="R-HSA-3108214">
    <property type="pathway name" value="SUMOylation of DNA damage response and repair proteins"/>
</dbReference>
<dbReference type="Reactome" id="R-HSA-3232142">
    <property type="pathway name" value="SUMOylation of ubiquitinylation proteins"/>
</dbReference>
<dbReference type="Reactome" id="R-HSA-3301854">
    <property type="pathway name" value="Nuclear Pore Complex (NPC) Disassembly"/>
</dbReference>
<dbReference type="Reactome" id="R-HSA-3371453">
    <property type="pathway name" value="Regulation of HSF1-mediated heat shock response"/>
</dbReference>
<dbReference type="Reactome" id="R-HSA-4085377">
    <property type="pathway name" value="SUMOylation of SUMOylation proteins"/>
</dbReference>
<dbReference type="Reactome" id="R-HSA-4551638">
    <property type="pathway name" value="SUMOylation of chromatin organization proteins"/>
</dbReference>
<dbReference type="Reactome" id="R-HSA-4570464">
    <property type="pathway name" value="SUMOylation of RNA binding proteins"/>
</dbReference>
<dbReference type="Reactome" id="R-HSA-4615885">
    <property type="pathway name" value="SUMOylation of DNA replication proteins"/>
</dbReference>
<dbReference type="Reactome" id="R-HSA-5578749">
    <property type="pathway name" value="Transcriptional regulation by small RNAs"/>
</dbReference>
<dbReference type="Reactome" id="R-HSA-5619107">
    <property type="pathway name" value="Defective TPR may confer susceptibility towards thyroid papillary carcinoma (TPC)"/>
</dbReference>
<dbReference type="Reactome" id="R-HSA-6784531">
    <property type="pathway name" value="tRNA processing in the nucleus"/>
</dbReference>
<dbReference type="Reactome" id="R-HSA-9609690">
    <property type="pathway name" value="HCMV Early Events"/>
</dbReference>
<dbReference type="Reactome" id="R-HSA-9610379">
    <property type="pathway name" value="HCMV Late Events"/>
</dbReference>
<dbReference type="Reactome" id="R-HSA-9615933">
    <property type="pathway name" value="Postmitotic nuclear pore complex (NPC) reformation"/>
</dbReference>
<dbReference type="Reactome" id="R-HSA-9705671">
    <property type="pathway name" value="SARS-CoV-2 activates/modulates innate and adaptive immune responses"/>
</dbReference>
<dbReference type="SignaLink" id="Q9BVL2"/>
<dbReference type="SIGNOR" id="Q9BVL2"/>
<dbReference type="BioGRID-ORCS" id="9818">
    <property type="hits" value="322 hits in 1161 CRISPR screens"/>
</dbReference>
<dbReference type="ChiTaRS" id="NUP58">
    <property type="organism name" value="human"/>
</dbReference>
<dbReference type="EvolutionaryTrace" id="Q9BVL2"/>
<dbReference type="GeneWiki" id="NUPL1"/>
<dbReference type="GenomeRNAi" id="9818"/>
<dbReference type="Pharos" id="Q9BVL2">
    <property type="development level" value="Tbio"/>
</dbReference>
<dbReference type="PRO" id="PR:Q9BVL2"/>
<dbReference type="Proteomes" id="UP000005640">
    <property type="component" value="Chromosome 13"/>
</dbReference>
<dbReference type="RNAct" id="Q9BVL2">
    <property type="molecule type" value="protein"/>
</dbReference>
<dbReference type="Bgee" id="ENSG00000139496">
    <property type="expression patterns" value="Expressed in adrenal tissue and 196 other cell types or tissues"/>
</dbReference>
<dbReference type="ExpressionAtlas" id="Q9BVL2">
    <property type="expression patterns" value="baseline and differential"/>
</dbReference>
<dbReference type="GO" id="GO:0005635">
    <property type="term" value="C:nuclear envelope"/>
    <property type="evidence" value="ECO:0000314"/>
    <property type="project" value="ComplexPortal"/>
</dbReference>
<dbReference type="GO" id="GO:0031965">
    <property type="term" value="C:nuclear membrane"/>
    <property type="evidence" value="ECO:0007669"/>
    <property type="project" value="UniProtKB-SubCell"/>
</dbReference>
<dbReference type="GO" id="GO:0005643">
    <property type="term" value="C:nuclear pore"/>
    <property type="evidence" value="ECO:0000318"/>
    <property type="project" value="GO_Central"/>
</dbReference>
<dbReference type="GO" id="GO:0042802">
    <property type="term" value="F:identical protein binding"/>
    <property type="evidence" value="ECO:0007669"/>
    <property type="project" value="Ensembl"/>
</dbReference>
<dbReference type="GO" id="GO:0008139">
    <property type="term" value="F:nuclear localization sequence binding"/>
    <property type="evidence" value="ECO:0000318"/>
    <property type="project" value="GO_Central"/>
</dbReference>
<dbReference type="GO" id="GO:0044877">
    <property type="term" value="F:protein-containing complex binding"/>
    <property type="evidence" value="ECO:0007669"/>
    <property type="project" value="Ensembl"/>
</dbReference>
<dbReference type="GO" id="GO:0017056">
    <property type="term" value="F:structural constituent of nuclear pore"/>
    <property type="evidence" value="ECO:0000318"/>
    <property type="project" value="GO_Central"/>
</dbReference>
<dbReference type="GO" id="GO:0051028">
    <property type="term" value="P:mRNA transport"/>
    <property type="evidence" value="ECO:0007669"/>
    <property type="project" value="UniProtKB-KW"/>
</dbReference>
<dbReference type="GO" id="GO:0006913">
    <property type="term" value="P:nucleocytoplasmic transport"/>
    <property type="evidence" value="ECO:0000303"/>
    <property type="project" value="ComplexPortal"/>
</dbReference>
<dbReference type="GO" id="GO:0015031">
    <property type="term" value="P:protein transport"/>
    <property type="evidence" value="ECO:0007669"/>
    <property type="project" value="UniProtKB-KW"/>
</dbReference>
<dbReference type="GO" id="GO:0042306">
    <property type="term" value="P:regulation of protein import into nucleus"/>
    <property type="evidence" value="ECO:0007669"/>
    <property type="project" value="Ensembl"/>
</dbReference>
<dbReference type="Gene3D" id="6.10.140.1350">
    <property type="match status" value="1"/>
</dbReference>
<dbReference type="InterPro" id="IPR024882">
    <property type="entry name" value="NUP58/p45/49"/>
</dbReference>
<dbReference type="PANTHER" id="PTHR13437">
    <property type="entry name" value="NUCLEOPORIN P58/P45 NUCLEOPORIN-LIKE PROTEIN 1"/>
    <property type="match status" value="1"/>
</dbReference>
<dbReference type="PANTHER" id="PTHR13437:SF2">
    <property type="entry name" value="NUCLEOPORIN P58_P45"/>
    <property type="match status" value="1"/>
</dbReference>
<dbReference type="Pfam" id="PF15967">
    <property type="entry name" value="Nucleoporin_FG2"/>
    <property type="match status" value="1"/>
</dbReference>
<protein>
    <recommendedName>
        <fullName evidence="8">Nucleoporin p58/p45</fullName>
    </recommendedName>
    <alternativeName>
        <fullName evidence="9">58 kDa nucleoporin</fullName>
    </alternativeName>
    <alternativeName>
        <fullName>Nucleoporin-like protein 1</fullName>
    </alternativeName>
</protein>
<sequence length="599" mass="60897">MSTGFSFGSGTLGSTTVAAGGTSTGGVFSFGTGASSNPSVGLNFGNLGSTSTPATTSAPSSGFGTGLFGSKPATGFTLGGTNTGIATTITTGLTLGTPATTSAATTGFSLGFNKPAASATPFALPITSTSASGLTLSSALTSTPAASTGFTLNNLGGTTATTTTASTGLSLGGALAGLGGSLFQSTNTGTSGLGQNALGLTLGTTAATSTAGNEGLGGIDFSSSSDKKSDKTGTRPEDSKALKDENLPPVICQDVENLQKFVKEQKQVQEEISRMSSKAMLKVQEDIKALKQLLSLAANGIQRNTLNIDKLKIETAQELKNAEIALRTQKTPPGLQHEYAAPADYFRILVQQFEVQLQQYRQQIEELENHLATQANNSHITPQDLSMAMQKIYQTFVALAAQLQSIHENVKVLKEQYLGYRKMFLGDAVDVFETRRAEAKKWQNTPRVTTGPTPFSTMPNAAAVAMAATLTQQQQPATGPQPSLGVSFGTPFGSGIGTGLQSSGLGSSNLGGFGTSSGFGCSTTGASTFGFGTTNKPSGSLSAGFGSSSTSGFNFSNPGITASAGLTFGVSNPASAGFGTGGQLLQLKKPPAGNKRGKR</sequence>
<evidence type="ECO:0000250" key="1"/>
<evidence type="ECO:0000250" key="2">
    <source>
        <dbReference type="UniProtKB" id="P70581"/>
    </source>
</evidence>
<evidence type="ECO:0000255" key="3"/>
<evidence type="ECO:0000256" key="4">
    <source>
        <dbReference type="SAM" id="MobiDB-lite"/>
    </source>
</evidence>
<evidence type="ECO:0000269" key="5">
    <source>
    </source>
</evidence>
<evidence type="ECO:0000303" key="6">
    <source>
    </source>
</evidence>
<evidence type="ECO:0000303" key="7">
    <source>
    </source>
</evidence>
<evidence type="ECO:0000305" key="8"/>
<evidence type="ECO:0000312" key="9">
    <source>
        <dbReference type="HGNC" id="HGNC:20261"/>
    </source>
</evidence>
<evidence type="ECO:0007744" key="10">
    <source>
    </source>
</evidence>
<evidence type="ECO:0007744" key="11">
    <source>
    </source>
</evidence>
<evidence type="ECO:0007744" key="12">
    <source>
    </source>
</evidence>
<evidence type="ECO:0007829" key="13">
    <source>
        <dbReference type="PDB" id="4JO7"/>
    </source>
</evidence>
<evidence type="ECO:0007829" key="14">
    <source>
        <dbReference type="PDB" id="4JQ5"/>
    </source>
</evidence>
<organism>
    <name type="scientific">Homo sapiens</name>
    <name type="common">Human</name>
    <dbReference type="NCBI Taxonomy" id="9606"/>
    <lineage>
        <taxon>Eukaryota</taxon>
        <taxon>Metazoa</taxon>
        <taxon>Chordata</taxon>
        <taxon>Craniata</taxon>
        <taxon>Vertebrata</taxon>
        <taxon>Euteleostomi</taxon>
        <taxon>Mammalia</taxon>
        <taxon>Eutheria</taxon>
        <taxon>Euarchontoglires</taxon>
        <taxon>Primates</taxon>
        <taxon>Haplorrhini</taxon>
        <taxon>Catarrhini</taxon>
        <taxon>Hominidae</taxon>
        <taxon>Homo</taxon>
    </lineage>
</organism>